<comment type="function">
    <text evidence="1">Has antimicrobial activity against B.cereus, L.lactis, L.innocua, M.luteus, S.epidermidis and S.uberis. Probably acts by disturbing membrane functions with its amphipathic structure.</text>
</comment>
<comment type="subcellular location">
    <subcellularLocation>
        <location>Secreted</location>
    </subcellularLocation>
</comment>
<comment type="tissue specificity">
    <text>Expressed by the skin glands.</text>
</comment>
<comment type="similarity">
    <text evidence="2">Belongs to the frog skin active peptide (FSAP) family. Aurein subfamily.</text>
</comment>
<dbReference type="GO" id="GO:0005576">
    <property type="term" value="C:extracellular region"/>
    <property type="evidence" value="ECO:0007669"/>
    <property type="project" value="UniProtKB-SubCell"/>
</dbReference>
<dbReference type="GO" id="GO:0042742">
    <property type="term" value="P:defense response to bacterium"/>
    <property type="evidence" value="ECO:0007669"/>
    <property type="project" value="UniProtKB-KW"/>
</dbReference>
<proteinExistence type="evidence at protein level"/>
<name>AUR21_RANRN</name>
<organism>
    <name type="scientific">Ranoidea raniformis</name>
    <name type="common">Southern bell frog</name>
    <name type="synonym">Litoria raniformis</name>
    <dbReference type="NCBI Taxonomy" id="116057"/>
    <lineage>
        <taxon>Eukaryota</taxon>
        <taxon>Metazoa</taxon>
        <taxon>Chordata</taxon>
        <taxon>Craniata</taxon>
        <taxon>Vertebrata</taxon>
        <taxon>Euteleostomi</taxon>
        <taxon>Amphibia</taxon>
        <taxon>Batrachia</taxon>
        <taxon>Anura</taxon>
        <taxon>Neobatrachia</taxon>
        <taxon>Hyloidea</taxon>
        <taxon>Hylidae</taxon>
        <taxon>Pelodryadinae</taxon>
        <taxon>Ranoidea</taxon>
    </lineage>
</organism>
<evidence type="ECO:0000269" key="1">
    <source>
    </source>
</evidence>
<evidence type="ECO:0000305" key="2"/>
<reference key="1">
    <citation type="journal article" date="2000" name="Eur. J. Biochem.">
        <title>The antibiotic and anticancer active aurein peptides from the australian bell frogs Litoria aurea and Litoria raniformis the solution structure of aurein 1.2.</title>
        <authorList>
            <person name="Rozek T."/>
            <person name="Wegener K.L."/>
            <person name="Bowie J.H."/>
            <person name="Olver I.N."/>
            <person name="Carver J.A."/>
            <person name="Wallace J.C."/>
            <person name="Tyler M.J."/>
        </authorList>
    </citation>
    <scope>PROTEIN SEQUENCE</scope>
    <scope>AMIDATION AT LEU-16</scope>
    <scope>FUNCTION</scope>
    <source>
        <tissue>Skin secretion</tissue>
    </source>
</reference>
<sequence>GLLDIVKKVVGAFGSL</sequence>
<accession>P69016</accession>
<accession>P82388</accession>
<keyword id="KW-0027">Amidation</keyword>
<keyword id="KW-0878">Amphibian defense peptide</keyword>
<keyword id="KW-0044">Antibiotic</keyword>
<keyword id="KW-0929">Antimicrobial</keyword>
<keyword id="KW-0903">Direct protein sequencing</keyword>
<keyword id="KW-0964">Secreted</keyword>
<feature type="peptide" id="PRO_0000010143" description="Aurein-2.1">
    <location>
        <begin position="1"/>
        <end position="16"/>
    </location>
</feature>
<feature type="peptide" id="PRO_0000010144" description="Aurein-2.1.1">
    <location>
        <begin position="3"/>
        <end position="16"/>
    </location>
</feature>
<feature type="modified residue" description="Leucine amide" evidence="1">
    <location>
        <position position="16"/>
    </location>
</feature>
<protein>
    <recommendedName>
        <fullName>Aurein-2.1</fullName>
    </recommendedName>
    <component>
        <recommendedName>
            <fullName>Aurein-2.1.1</fullName>
        </recommendedName>
    </component>
</protein>